<accession>P19997</accession>
<sequence>MLSLPRLQTVNDERSPALRALRRTPVMEARPLEVYATYACGERGELAGGLVGHVQWQWLHVDLLWVDAGARGAGLGSRLIARAEARAREEFGCIGSQVETWDFQAPGFYQRVGYRLAASIPDYPPGITSHLLVKEL</sequence>
<proteinExistence type="predicted"/>
<protein>
    <recommendedName>
        <fullName>Blasticidin-S acetyltransferase</fullName>
        <ecNumber>2.3.1.-</ecNumber>
    </recommendedName>
</protein>
<comment type="function">
    <text>Confers resistance to blasticidin S antibiotic.</text>
</comment>
<keyword id="KW-0012">Acyltransferase</keyword>
<keyword id="KW-0046">Antibiotic resistance</keyword>
<keyword id="KW-0808">Transferase</keyword>
<name>BLS_STRMO</name>
<feature type="chain" id="PRO_0000064944" description="Blasticidin-S acetyltransferase">
    <location>
        <begin position="1"/>
        <end position="136"/>
    </location>
</feature>
<feature type="domain" description="N-acetyltransferase" evidence="1">
    <location>
        <begin position="1"/>
        <end position="136"/>
    </location>
</feature>
<dbReference type="EC" id="2.3.1.-"/>
<dbReference type="EMBL" id="M34537">
    <property type="protein sequence ID" value="AAA26840.1"/>
    <property type="molecule type" value="Genomic_DNA"/>
</dbReference>
<dbReference type="PIR" id="JQ0421">
    <property type="entry name" value="JQ0421"/>
</dbReference>
<dbReference type="SMR" id="P19997"/>
<dbReference type="GO" id="GO:0016747">
    <property type="term" value="F:acyltransferase activity, transferring groups other than amino-acyl groups"/>
    <property type="evidence" value="ECO:0007669"/>
    <property type="project" value="InterPro"/>
</dbReference>
<dbReference type="GO" id="GO:0046677">
    <property type="term" value="P:response to antibiotic"/>
    <property type="evidence" value="ECO:0007669"/>
    <property type="project" value="UniProtKB-KW"/>
</dbReference>
<dbReference type="Gene3D" id="3.40.630.30">
    <property type="match status" value="1"/>
</dbReference>
<dbReference type="InterPro" id="IPR016181">
    <property type="entry name" value="Acyl_CoA_acyltransferase"/>
</dbReference>
<dbReference type="InterPro" id="IPR000182">
    <property type="entry name" value="GNAT_dom"/>
</dbReference>
<dbReference type="Pfam" id="PF00583">
    <property type="entry name" value="Acetyltransf_1"/>
    <property type="match status" value="1"/>
</dbReference>
<dbReference type="SUPFAM" id="SSF55729">
    <property type="entry name" value="Acyl-CoA N-acyltransferases (Nat)"/>
    <property type="match status" value="1"/>
</dbReference>
<dbReference type="PROSITE" id="PS51186">
    <property type="entry name" value="GNAT"/>
    <property type="match status" value="1"/>
</dbReference>
<organism>
    <name type="scientific">Streptomyces morookaense</name>
    <name type="common">Streptoverticillium morookaense</name>
    <dbReference type="NCBI Taxonomy" id="1970"/>
    <lineage>
        <taxon>Bacteria</taxon>
        <taxon>Bacillati</taxon>
        <taxon>Actinomycetota</taxon>
        <taxon>Actinomycetes</taxon>
        <taxon>Kitasatosporales</taxon>
        <taxon>Streptomycetaceae</taxon>
        <taxon>Streptomyces</taxon>
    </lineage>
</organism>
<gene>
    <name type="primary">bls</name>
</gene>
<evidence type="ECO:0000255" key="1">
    <source>
        <dbReference type="PROSITE-ProRule" id="PRU00532"/>
    </source>
</evidence>
<reference key="1">
    <citation type="journal article" date="1990" name="Gene">
        <title>Cloning and characterization of the gene encoding a blasticidin S acetyltransferase from Streptoverticillum sp.</title>
        <authorList>
            <person name="Perez-Gonzalez J.A."/>
            <person name="Ruiz D."/>
            <person name="Esteban J.A."/>
            <person name="Jimenez A."/>
        </authorList>
    </citation>
    <scope>NUCLEOTIDE SEQUENCE [GENOMIC DNA]</scope>
</reference>